<evidence type="ECO:0000305" key="1"/>
<organism>
    <name type="scientific">Staphylococcus aureus (strain N315)</name>
    <dbReference type="NCBI Taxonomy" id="158879"/>
    <lineage>
        <taxon>Bacteria</taxon>
        <taxon>Bacillati</taxon>
        <taxon>Bacillota</taxon>
        <taxon>Bacilli</taxon>
        <taxon>Bacillales</taxon>
        <taxon>Staphylococcaceae</taxon>
        <taxon>Staphylococcus</taxon>
    </lineage>
</organism>
<proteinExistence type="evidence at protein level"/>
<name>TELL_STAAN</name>
<gene>
    <name type="ordered locus">SA1238</name>
</gene>
<accession>P60108</accession>
<accession>Q99U81</accession>
<protein>
    <recommendedName>
        <fullName>TelA-like protein SA1238</fullName>
    </recommendedName>
</protein>
<dbReference type="EMBL" id="BA000018">
    <property type="protein sequence ID" value="BAB42498.1"/>
    <property type="molecule type" value="Genomic_DNA"/>
</dbReference>
<dbReference type="PIR" id="F89917">
    <property type="entry name" value="F89917"/>
</dbReference>
<dbReference type="RefSeq" id="WP_000138415.1">
    <property type="nucleotide sequence ID" value="NC_002745.2"/>
</dbReference>
<dbReference type="SMR" id="P60108"/>
<dbReference type="EnsemblBacteria" id="BAB42498">
    <property type="protein sequence ID" value="BAB42498"/>
    <property type="gene ID" value="BAB42498"/>
</dbReference>
<dbReference type="KEGG" id="sau:SA1238"/>
<dbReference type="HOGENOM" id="CLU_032111_0_0_9"/>
<dbReference type="InterPro" id="IPR008863">
    <property type="entry name" value="Toxic_anion-R_TelA"/>
</dbReference>
<dbReference type="PANTHER" id="PTHR38432">
    <property type="entry name" value="TELA-LIKE PROTEIN SAOUHSC_01408"/>
    <property type="match status" value="1"/>
</dbReference>
<dbReference type="PANTHER" id="PTHR38432:SF1">
    <property type="entry name" value="TELA-LIKE PROTEIN SAOUHSC_01408"/>
    <property type="match status" value="1"/>
</dbReference>
<dbReference type="Pfam" id="PF05816">
    <property type="entry name" value="TelA"/>
    <property type="match status" value="1"/>
</dbReference>
<dbReference type="PIRSF" id="PIRSF026508">
    <property type="entry name" value="TelA"/>
    <property type="match status" value="1"/>
</dbReference>
<comment type="similarity">
    <text evidence="1">Belongs to the TelA family.</text>
</comment>
<feature type="chain" id="PRO_0000172804" description="TelA-like protein SA1238">
    <location>
        <begin position="1"/>
        <end position="378"/>
    </location>
</feature>
<sequence length="378" mass="43423">MTENKSFKESHPLDDFISDKELSNTTIQKEKLTIEQQKQVDTISKQINPLDNEGLLAFGSDLQKQMSQFSHQMLDEVQSKDVGPIGDTLSDLMSKLKSVNPNELNTDKPSMLKRIFSRAKSSINEIFSRMQSVSAQVDRITIQLQKHQTHLTRDIELLDTLYDKNKQYFDDLSLHIIAAQQKKLQLENEKLPQLQQQAQQSTNQMDIQQVSDMQQFIDRLDKRIYDLQLSRQIALQTAPQIRMIQNVNQALAEKIQSSILTSIPLWKNQMAIALTLMRQRNAVAAQRAVTDTTNDLLTANAEMLKQNAIETATENERGIVDLDTLKRTQRNIIETIEETLIIQQHGREERQLAEKELQQLEQDLKSHLVNIKGPNKQS</sequence>
<reference key="1">
    <citation type="journal article" date="2001" name="Lancet">
        <title>Whole genome sequencing of meticillin-resistant Staphylococcus aureus.</title>
        <authorList>
            <person name="Kuroda M."/>
            <person name="Ohta T."/>
            <person name="Uchiyama I."/>
            <person name="Baba T."/>
            <person name="Yuzawa H."/>
            <person name="Kobayashi I."/>
            <person name="Cui L."/>
            <person name="Oguchi A."/>
            <person name="Aoki K."/>
            <person name="Nagai Y."/>
            <person name="Lian J.-Q."/>
            <person name="Ito T."/>
            <person name="Kanamori M."/>
            <person name="Matsumaru H."/>
            <person name="Maruyama A."/>
            <person name="Murakami H."/>
            <person name="Hosoyama A."/>
            <person name="Mizutani-Ui Y."/>
            <person name="Takahashi N.K."/>
            <person name="Sawano T."/>
            <person name="Inoue R."/>
            <person name="Kaito C."/>
            <person name="Sekimizu K."/>
            <person name="Hirakawa H."/>
            <person name="Kuhara S."/>
            <person name="Goto S."/>
            <person name="Yabuzaki J."/>
            <person name="Kanehisa M."/>
            <person name="Yamashita A."/>
            <person name="Oshima K."/>
            <person name="Furuya K."/>
            <person name="Yoshino C."/>
            <person name="Shiba T."/>
            <person name="Hattori M."/>
            <person name="Ogasawara N."/>
            <person name="Hayashi H."/>
            <person name="Hiramatsu K."/>
        </authorList>
    </citation>
    <scope>NUCLEOTIDE SEQUENCE [LARGE SCALE GENOMIC DNA]</scope>
    <source>
        <strain>N315</strain>
    </source>
</reference>
<reference key="2">
    <citation type="journal article" date="2005" name="J. Microbiol. Methods">
        <title>Correlation of proteomic and transcriptomic profiles of Staphylococcus aureus during the post-exponential phase of growth.</title>
        <authorList>
            <person name="Scherl A."/>
            <person name="Francois P."/>
            <person name="Bento M."/>
            <person name="Deshusses J.M."/>
            <person name="Charbonnier Y."/>
            <person name="Converset V."/>
            <person name="Huyghe A."/>
            <person name="Walter N."/>
            <person name="Hoogland C."/>
            <person name="Appel R.D."/>
            <person name="Sanchez J.-C."/>
            <person name="Zimmermann-Ivol C.G."/>
            <person name="Corthals G.L."/>
            <person name="Hochstrasser D.F."/>
            <person name="Schrenzel J."/>
        </authorList>
    </citation>
    <scope>IDENTIFICATION BY MASS SPECTROMETRY</scope>
    <source>
        <strain>N315</strain>
    </source>
</reference>
<reference key="3">
    <citation type="submission" date="2007-10" db="UniProtKB">
        <title>Shotgun proteomic analysis of total and membrane protein extracts of S. aureus strain N315.</title>
        <authorList>
            <person name="Vaezzadeh A.R."/>
            <person name="Deshusses J."/>
            <person name="Lescuyer P."/>
            <person name="Hochstrasser D.F."/>
        </authorList>
    </citation>
    <scope>IDENTIFICATION BY MASS SPECTROMETRY [LARGE SCALE ANALYSIS]</scope>
    <source>
        <strain>N315</strain>
    </source>
</reference>